<keyword id="KW-0903">Direct protein sequencing</keyword>
<keyword id="KW-0256">Endoplasmic reticulum</keyword>
<keyword id="KW-0443">Lipid metabolism</keyword>
<keyword id="KW-0492">Microsome</keyword>
<keyword id="KW-0520">NAD</keyword>
<keyword id="KW-0560">Oxidoreductase</keyword>
<keyword id="KW-1185">Reference proteome</keyword>
<keyword id="KW-0753">Steroid metabolism</keyword>
<evidence type="ECO:0000250" key="1"/>
<evidence type="ECO:0000250" key="2">
    <source>
        <dbReference type="UniProtKB" id="P51661"/>
    </source>
</evidence>
<evidence type="ECO:0000250" key="3">
    <source>
        <dbReference type="UniProtKB" id="P80365"/>
    </source>
</evidence>
<evidence type="ECO:0000255" key="4">
    <source>
        <dbReference type="PROSITE-ProRule" id="PRU10001"/>
    </source>
</evidence>
<evidence type="ECO:0000256" key="5">
    <source>
        <dbReference type="SAM" id="MobiDB-lite"/>
    </source>
</evidence>
<evidence type="ECO:0000269" key="6">
    <source>
    </source>
</evidence>
<evidence type="ECO:0000269" key="7">
    <source>
    </source>
</evidence>
<evidence type="ECO:0000269" key="8">
    <source>
    </source>
</evidence>
<evidence type="ECO:0000303" key="9">
    <source>
    </source>
</evidence>
<evidence type="ECO:0000303" key="10">
    <source>
    </source>
</evidence>
<evidence type="ECO:0000305" key="11"/>
<gene>
    <name type="primary">Hsd11b2</name>
    <name type="synonym">Hsd11k</name>
</gene>
<accession>P50233</accession>
<comment type="function">
    <text evidence="2 3 8 9 10">Catalyzes the conversion of biologically active 11beta-hydroxyglucocorticoids (11beta-hydroxysteroid) such as corticosterone, to inactive 11-ketoglucocorticoids (11-oxosteroid) such as 11-dehydrocorticosterone, in the presence of NAD(+) (PubMed:7649078). Functions as a dehydrogenase (oxidase), thereby decreasing the concentration of active glucocorticoids, thus protecting the nonselective mineralocorticoid receptor from occupation by glucocorticoids (PubMed:34028587, PubMed:7649078). Plays an important role in maintaining glucocorticoids balance during preimplantation and protects the fetus from excessive maternal corticosterone exposure (PubMed:34028587). Catalyzes the oxidation of 11beta-hydroxytestosterone (11beta,17beta-dihydroxyandrost-4-ene-3-one) to 11-ketotestosterone (17beta-hydroxyandrost-4-ene-3,11-dione), a major bioactive androgen (By similarity). Catalyzes the conversion of 11beta-hydroxyandrostenedione (11beta-hydroxyandrost-4-ene-3,17-dione) to 11-ketoandrostenedione (androst-4-ene-3,11,17-trione), which can be further metabolized to 11-ketotestosterone (By similarity). Converts 7-beta-25-dihydroxycholesterol to 7-oxo-25-hydroxycholesterol in vitro (By similarity). 7-beta-25-dihydroxycholesterol (not 7-oxo-25-hydroxycholesterol) acts as a ligand for the G-protein-coupled receptor (GPCR) Epstein-Barr virus-induced gene 2 (EBI2) and may thereby regulate immune cell migration (By similarity).</text>
</comment>
<comment type="catalytic activity">
    <reaction evidence="8">
        <text>an 11beta-hydroxysteroid + NAD(+) = an 11-oxosteroid + NADH + H(+)</text>
        <dbReference type="Rhea" id="RHEA:53116"/>
        <dbReference type="ChEBI" id="CHEBI:15378"/>
        <dbReference type="ChEBI" id="CHEBI:35346"/>
        <dbReference type="ChEBI" id="CHEBI:47787"/>
        <dbReference type="ChEBI" id="CHEBI:57540"/>
        <dbReference type="ChEBI" id="CHEBI:57945"/>
    </reaction>
    <physiologicalReaction direction="left-to-right" evidence="8">
        <dbReference type="Rhea" id="RHEA:53117"/>
    </physiologicalReaction>
</comment>
<comment type="catalytic activity">
    <reaction evidence="8">
        <text>corticosterone + NAD(+) = 11-dehydrocorticosterone + NADH + H(+)</text>
        <dbReference type="Rhea" id="RHEA:42204"/>
        <dbReference type="ChEBI" id="CHEBI:15378"/>
        <dbReference type="ChEBI" id="CHEBI:16827"/>
        <dbReference type="ChEBI" id="CHEBI:57540"/>
        <dbReference type="ChEBI" id="CHEBI:57945"/>
        <dbReference type="ChEBI" id="CHEBI:78600"/>
    </reaction>
    <physiologicalReaction direction="left-to-right" evidence="8">
        <dbReference type="Rhea" id="RHEA:42205"/>
    </physiologicalReaction>
</comment>
<comment type="catalytic activity">
    <reaction evidence="2">
        <text>11beta,17beta-dihydroxyandrost-4-ene-3-one + NAD(+) = 17beta-hydroxyandrost-4-ene-3,11-dione + NADH + H(+)</text>
        <dbReference type="Rhea" id="RHEA:69368"/>
        <dbReference type="ChEBI" id="CHEBI:15378"/>
        <dbReference type="ChEBI" id="CHEBI:34133"/>
        <dbReference type="ChEBI" id="CHEBI:57540"/>
        <dbReference type="ChEBI" id="CHEBI:57945"/>
        <dbReference type="ChEBI" id="CHEBI:81481"/>
    </reaction>
    <physiologicalReaction direction="left-to-right" evidence="2">
        <dbReference type="Rhea" id="RHEA:69369"/>
    </physiologicalReaction>
</comment>
<comment type="catalytic activity">
    <reaction evidence="3">
        <text>11beta-hydroxyandrost-4-ene-3,17-dione + NAD(+) = androst-4-ene-3,11,17-trione + NADH + H(+)</text>
        <dbReference type="Rhea" id="RHEA:69408"/>
        <dbReference type="ChEBI" id="CHEBI:2495"/>
        <dbReference type="ChEBI" id="CHEBI:15378"/>
        <dbReference type="ChEBI" id="CHEBI:27967"/>
        <dbReference type="ChEBI" id="CHEBI:57540"/>
        <dbReference type="ChEBI" id="CHEBI:57945"/>
    </reaction>
    <physiologicalReaction direction="left-to-right" evidence="3">
        <dbReference type="Rhea" id="RHEA:69409"/>
    </physiologicalReaction>
</comment>
<comment type="activity regulation">
    <text evidence="2 3">Inhibited by glycyrrhetinic acid (By similarity). Induced by progesterone, through the Ihh signaling pathway (By similarity).</text>
</comment>
<comment type="biophysicochemical properties">
    <kinetics>
        <KM evidence="8">10 nM for corticosterone</KM>
    </kinetics>
</comment>
<comment type="pathway">
    <text evidence="11">Steroid metabolism.</text>
</comment>
<comment type="subunit">
    <text evidence="3">Interacts with ligand-free cytoplasmic NR3C2.</text>
</comment>
<comment type="subcellular location">
    <subcellularLocation>
        <location evidence="3">Microsome</location>
    </subcellularLocation>
    <subcellularLocation>
        <location evidence="3">Endoplasmic reticulum</location>
    </subcellularLocation>
</comment>
<comment type="tissue specificity">
    <text evidence="8">Highly expressed in kidney, adrenal gland and distal colon, and at much lower levels in lung, hypothalamus, hippocampus, and midbrain.</text>
</comment>
<comment type="disruption phenotype">
    <text evidence="7">Homozygous knockout pups have reduced Na(+) and water content in the skin at birth, but retain higher levels of Na(+) and water in the skin throughout development and into adulthood at the expense of K(+), manifesting hypokalaemia by 15 days of age and contributing to salt sensitive hypertension.</text>
</comment>
<comment type="similarity">
    <text evidence="11">Belongs to the short-chain dehydrogenases/reductases (SDR) family.</text>
</comment>
<comment type="caution">
    <text evidence="6">Rats and mice do not produce appreciable cortisol, because they do not express the 17-alpha hydroxylase (Cyp17a1) enzyme in the adrenals.</text>
</comment>
<proteinExistence type="evidence at protein level"/>
<dbReference type="EC" id="1.1.1.-" evidence="8"/>
<dbReference type="EMBL" id="U22424">
    <property type="protein sequence ID" value="AAA87007.1"/>
    <property type="molecule type" value="mRNA"/>
</dbReference>
<dbReference type="EMBL" id="BC087023">
    <property type="protein sequence ID" value="AAH87023.1"/>
    <property type="molecule type" value="mRNA"/>
</dbReference>
<dbReference type="RefSeq" id="NP_058777.1">
    <property type="nucleotide sequence ID" value="NM_017081.2"/>
</dbReference>
<dbReference type="SMR" id="P50233"/>
<dbReference type="FunCoup" id="P50233">
    <property type="interactions" value="8"/>
</dbReference>
<dbReference type="STRING" id="10116.ENSRNOP00000023130"/>
<dbReference type="BindingDB" id="P50233"/>
<dbReference type="ChEMBL" id="CHEMBL2908"/>
<dbReference type="DrugCentral" id="P50233"/>
<dbReference type="GlyGen" id="P50233">
    <property type="glycosylation" value="1 site"/>
</dbReference>
<dbReference type="PhosphoSitePlus" id="P50233"/>
<dbReference type="PaxDb" id="10116-ENSRNOP00000023130"/>
<dbReference type="DNASU" id="25117"/>
<dbReference type="Ensembl" id="ENSRNOT00000023130.4">
    <property type="protein sequence ID" value="ENSRNOP00000023130.1"/>
    <property type="gene ID" value="ENSRNOG00000017084.4"/>
</dbReference>
<dbReference type="GeneID" id="25117"/>
<dbReference type="KEGG" id="rno:25117"/>
<dbReference type="UCSC" id="RGD:2835">
    <property type="organism name" value="rat"/>
</dbReference>
<dbReference type="AGR" id="RGD:2835"/>
<dbReference type="CTD" id="3291"/>
<dbReference type="RGD" id="2835">
    <property type="gene designation" value="Hsd11b2"/>
</dbReference>
<dbReference type="eggNOG" id="KOG1610">
    <property type="taxonomic scope" value="Eukaryota"/>
</dbReference>
<dbReference type="GeneTree" id="ENSGT00940000159716"/>
<dbReference type="HOGENOM" id="CLU_010194_2_0_1"/>
<dbReference type="InParanoid" id="P50233"/>
<dbReference type="OMA" id="GMGLMYF"/>
<dbReference type="OrthoDB" id="9876299at2759"/>
<dbReference type="PhylomeDB" id="P50233"/>
<dbReference type="TreeFam" id="TF325617"/>
<dbReference type="BRENDA" id="1.1.1.146">
    <property type="organism ID" value="5301"/>
</dbReference>
<dbReference type="Reactome" id="R-RNO-194002">
    <property type="pathway name" value="Glucocorticoid biosynthesis"/>
</dbReference>
<dbReference type="Reactome" id="R-RNO-9757110">
    <property type="pathway name" value="Prednisone ADME"/>
</dbReference>
<dbReference type="PRO" id="PR:P50233"/>
<dbReference type="Proteomes" id="UP000002494">
    <property type="component" value="Chromosome 19"/>
</dbReference>
<dbReference type="Bgee" id="ENSRNOG00000017084">
    <property type="expression patterns" value="Expressed in kidney and 17 other cell types or tissues"/>
</dbReference>
<dbReference type="ExpressionAtlas" id="P50233">
    <property type="expression patterns" value="baseline and differential"/>
</dbReference>
<dbReference type="GO" id="GO:0005783">
    <property type="term" value="C:endoplasmic reticulum"/>
    <property type="evidence" value="ECO:0007669"/>
    <property type="project" value="UniProtKB-SubCell"/>
</dbReference>
<dbReference type="GO" id="GO:0043231">
    <property type="term" value="C:intracellular membrane-bounded organelle"/>
    <property type="evidence" value="ECO:0000318"/>
    <property type="project" value="GO_Central"/>
</dbReference>
<dbReference type="GO" id="GO:0070523">
    <property type="term" value="F:11-beta-hydroxysteroid dehydrogenase (NAD+) activity"/>
    <property type="evidence" value="ECO:0000266"/>
    <property type="project" value="RGD"/>
</dbReference>
<dbReference type="GO" id="GO:0051287">
    <property type="term" value="F:NAD binding"/>
    <property type="evidence" value="ECO:0000314"/>
    <property type="project" value="RGD"/>
</dbReference>
<dbReference type="GO" id="GO:0005496">
    <property type="term" value="F:steroid binding"/>
    <property type="evidence" value="ECO:0000353"/>
    <property type="project" value="RGD"/>
</dbReference>
<dbReference type="GO" id="GO:0034650">
    <property type="term" value="P:cortisol metabolic process"/>
    <property type="evidence" value="ECO:0000266"/>
    <property type="project" value="RGD"/>
</dbReference>
<dbReference type="GO" id="GO:0007565">
    <property type="term" value="P:female pregnancy"/>
    <property type="evidence" value="ECO:0000270"/>
    <property type="project" value="RGD"/>
</dbReference>
<dbReference type="GO" id="GO:0008211">
    <property type="term" value="P:glucocorticoid metabolic process"/>
    <property type="evidence" value="ECO:0000314"/>
    <property type="project" value="RGD"/>
</dbReference>
<dbReference type="GO" id="GO:0002017">
    <property type="term" value="P:regulation of blood volume by renal aldosterone"/>
    <property type="evidence" value="ECO:0000315"/>
    <property type="project" value="RGD"/>
</dbReference>
<dbReference type="GO" id="GO:0032094">
    <property type="term" value="P:response to food"/>
    <property type="evidence" value="ECO:0000270"/>
    <property type="project" value="RGD"/>
</dbReference>
<dbReference type="GO" id="GO:0051384">
    <property type="term" value="P:response to glucocorticoid"/>
    <property type="evidence" value="ECO:0000270"/>
    <property type="project" value="RGD"/>
</dbReference>
<dbReference type="GO" id="GO:0001666">
    <property type="term" value="P:response to hypoxia"/>
    <property type="evidence" value="ECO:0000270"/>
    <property type="project" value="RGD"/>
</dbReference>
<dbReference type="GO" id="GO:0032868">
    <property type="term" value="P:response to insulin"/>
    <property type="evidence" value="ECO:0000270"/>
    <property type="project" value="RGD"/>
</dbReference>
<dbReference type="GO" id="GO:0048545">
    <property type="term" value="P:response to steroid hormone"/>
    <property type="evidence" value="ECO:0000270"/>
    <property type="project" value="RGD"/>
</dbReference>
<dbReference type="GO" id="GO:0009410">
    <property type="term" value="P:response to xenobiotic stimulus"/>
    <property type="evidence" value="ECO:0000270"/>
    <property type="project" value="RGD"/>
</dbReference>
<dbReference type="CDD" id="cd09805">
    <property type="entry name" value="type2_17beta_HSD-like_SDR_c"/>
    <property type="match status" value="1"/>
</dbReference>
<dbReference type="FunFam" id="3.40.50.720:FF:000074">
    <property type="entry name" value="Retinol dehydrogenase type 1"/>
    <property type="match status" value="1"/>
</dbReference>
<dbReference type="Gene3D" id="3.40.50.720">
    <property type="entry name" value="NAD(P)-binding Rossmann-like Domain"/>
    <property type="match status" value="1"/>
</dbReference>
<dbReference type="InterPro" id="IPR036291">
    <property type="entry name" value="NAD(P)-bd_dom_sf"/>
</dbReference>
<dbReference type="InterPro" id="IPR020904">
    <property type="entry name" value="Sc_DH/Rdtase_CS"/>
</dbReference>
<dbReference type="InterPro" id="IPR002347">
    <property type="entry name" value="SDR_fam"/>
</dbReference>
<dbReference type="PANTHER" id="PTHR43313:SF2">
    <property type="entry name" value="11-BETA-HYDROXYSTEROID DEHYDROGENASE TYPE 2"/>
    <property type="match status" value="1"/>
</dbReference>
<dbReference type="PANTHER" id="PTHR43313">
    <property type="entry name" value="SHORT-CHAIN DEHYDROGENASE/REDUCTASE FAMILY 9C"/>
    <property type="match status" value="1"/>
</dbReference>
<dbReference type="Pfam" id="PF00106">
    <property type="entry name" value="adh_short"/>
    <property type="match status" value="1"/>
</dbReference>
<dbReference type="PRINTS" id="PR00081">
    <property type="entry name" value="GDHRDH"/>
</dbReference>
<dbReference type="SUPFAM" id="SSF51735">
    <property type="entry name" value="NAD(P)-binding Rossmann-fold domains"/>
    <property type="match status" value="1"/>
</dbReference>
<dbReference type="PROSITE" id="PS00061">
    <property type="entry name" value="ADH_SHORT"/>
    <property type="match status" value="1"/>
</dbReference>
<sequence length="400" mass="43726">MERWPWPSGGAWLLVAARALLQLLRSDLRLGRPLLAALALLAALDWLCQRLLPPPAALVVLAGAGWIALSRLARPPRLPVATRAVLITGCDTGFGKETAKKLDAMGFTVLATVLDLNGPGALELRARCSPRLKLLQMDLTKPEDISRVLEITKAHTASTGLWGLVNNAGLNMVVADVELSPVVTFRECMEVNFFGALELTKGLLPLLRHSRGRIVTVGSPAGDMPYPCLAAYGTSKAAIALLMDTFSCELLPWGIKVSIIQPGCFKTEAVTNVNLWEKRKQLLLANLPRELLQAYGEDYIEHLHGQFLNSLRMALPDLSPVVDAIIDALLAAQPRSRYYTGRGLGLMYFIHHYLPGGLRRRFLQNFFISHLLPRALRPGQPGPVHDTTQDPNPSPTVSAL</sequence>
<protein>
    <recommendedName>
        <fullName>11-beta-hydroxysteroid dehydrogenase type 2</fullName>
        <shortName>11-DH2</shortName>
        <shortName>11-beta-HSD2</shortName>
        <ecNumber evidence="8">1.1.1.-</ecNumber>
    </recommendedName>
    <alternativeName>
        <fullName>Corticosteroid 11-beta-dehydrogenase isozyme 2</fullName>
    </alternativeName>
    <alternativeName>
        <fullName>NAD-dependent 11-beta-hydroxysteroid dehydrogenase</fullName>
    </alternativeName>
</protein>
<reference key="1">
    <citation type="journal article" date="1995" name="Endocrinology">
        <title>Cloning, expression, and tissue distribution of the rat nicotinamide adenine dinucleotide-dependent 11 beta-hydroxysteroid dehydrogenase.</title>
        <authorList>
            <person name="Zhou M.-Y."/>
            <person name="Gomez-Sanchez E.P."/>
            <person name="Cox D.L."/>
            <person name="Cosby D."/>
            <person name="Gomez-Sanchez C.E."/>
        </authorList>
    </citation>
    <scope>NUCLEOTIDE SEQUENCE [MRNA]</scope>
    <scope>TISSUE SPECIFICITY</scope>
    <scope>FUNCTION</scope>
    <scope>CATALYTIC ACTIVITY</scope>
    <scope>BIOPHYSICOCHEMICAL PROPERTIES</scope>
    <source>
        <strain>Sprague-Dawley</strain>
        <tissue>Kidney</tissue>
    </source>
</reference>
<reference key="2">
    <citation type="journal article" date="2004" name="Genome Res.">
        <title>The status, quality, and expansion of the NIH full-length cDNA project: the Mammalian Gene Collection (MGC).</title>
        <authorList>
            <consortium name="The MGC Project Team"/>
        </authorList>
    </citation>
    <scope>NUCLEOTIDE SEQUENCE [LARGE SCALE MRNA]</scope>
    <source>
        <tissue>Kidney</tissue>
    </source>
</reference>
<reference key="3">
    <citation type="journal article" date="1992" name="Life Sci.">
        <title>Adrenal glands of mouse and rat do not synthesize androgens.</title>
        <authorList>
            <person name="van Weerden W.M."/>
            <person name="Bierings H.G."/>
            <person name="van Steenbrugge G.J."/>
            <person name="de Jong F.H."/>
            <person name="Schroeder F.H."/>
        </authorList>
    </citation>
    <scope>CAUTION</scope>
</reference>
<reference key="4">
    <citation type="submission" date="2009-01" db="UniProtKB">
        <authorList>
            <person name="Lubec G."/>
            <person name="Chen W.-Q."/>
        </authorList>
    </citation>
    <scope>PROTEIN SEQUENCE OF 19-25</scope>
    <scope>IDENTIFICATION BY MASS SPECTROMETRY</scope>
    <source>
        <strain>Sprague-Dawley</strain>
        <tissue>Hippocampus</tissue>
    </source>
</reference>
<reference key="5">
    <citation type="journal article" date="2021" name="Pflugers Arch.">
        <title>Abnormal neonatal sodium handling in skin precedes hypertension in the SAME rat.</title>
        <authorList>
            <person name="Mullins L."/>
            <person name="Ivy J."/>
            <person name="Ward M."/>
            <person name="Tenstad O."/>
            <person name="Wiig H."/>
            <person name="Kitada K."/>
            <person name="Manning J."/>
            <person name="Rakova N."/>
            <person name="Muller D."/>
            <person name="Mullins J."/>
        </authorList>
    </citation>
    <scope>FUNCTION</scope>
    <scope>DISRUPTION PHENOTYPE</scope>
</reference>
<feature type="chain" id="PRO_0000054630" description="11-beta-hydroxysteroid dehydrogenase type 2">
    <location>
        <begin position="1"/>
        <end position="400"/>
    </location>
</feature>
<feature type="region of interest" description="Disordered" evidence="5">
    <location>
        <begin position="378"/>
        <end position="400"/>
    </location>
</feature>
<feature type="compositionally biased region" description="Polar residues" evidence="5">
    <location>
        <begin position="389"/>
        <end position="400"/>
    </location>
</feature>
<feature type="active site" description="Proton acceptor" evidence="4">
    <location>
        <position position="232"/>
    </location>
</feature>
<feature type="binding site" evidence="1">
    <location>
        <begin position="82"/>
        <end position="111"/>
    </location>
    <ligand>
        <name>NAD(+)</name>
        <dbReference type="ChEBI" id="CHEBI:57540"/>
    </ligand>
</feature>
<feature type="binding site" evidence="1">
    <location>
        <position position="219"/>
    </location>
    <ligand>
        <name>substrate</name>
    </ligand>
</feature>
<organism>
    <name type="scientific">Rattus norvegicus</name>
    <name type="common">Rat</name>
    <dbReference type="NCBI Taxonomy" id="10116"/>
    <lineage>
        <taxon>Eukaryota</taxon>
        <taxon>Metazoa</taxon>
        <taxon>Chordata</taxon>
        <taxon>Craniata</taxon>
        <taxon>Vertebrata</taxon>
        <taxon>Euteleostomi</taxon>
        <taxon>Mammalia</taxon>
        <taxon>Eutheria</taxon>
        <taxon>Euarchontoglires</taxon>
        <taxon>Glires</taxon>
        <taxon>Rodentia</taxon>
        <taxon>Myomorpha</taxon>
        <taxon>Muroidea</taxon>
        <taxon>Muridae</taxon>
        <taxon>Murinae</taxon>
        <taxon>Rattus</taxon>
    </lineage>
</organism>
<name>DHI2_RAT</name>